<sequence length="25" mass="2709">MVSEAIAALKEREGSSEFAIGKKKE</sequence>
<name>H11_WHEAT</name>
<evidence type="ECO:0000255" key="1">
    <source>
        <dbReference type="PROSITE-ProRule" id="PRU00837"/>
    </source>
</evidence>
<evidence type="ECO:0000256" key="2">
    <source>
        <dbReference type="SAM" id="MobiDB-lite"/>
    </source>
</evidence>
<organism>
    <name type="scientific">Triticum aestivum</name>
    <name type="common">Wheat</name>
    <dbReference type="NCBI Taxonomy" id="4565"/>
    <lineage>
        <taxon>Eukaryota</taxon>
        <taxon>Viridiplantae</taxon>
        <taxon>Streptophyta</taxon>
        <taxon>Embryophyta</taxon>
        <taxon>Tracheophyta</taxon>
        <taxon>Spermatophyta</taxon>
        <taxon>Magnoliopsida</taxon>
        <taxon>Liliopsida</taxon>
        <taxon>Poales</taxon>
        <taxon>Poaceae</taxon>
        <taxon>BOP clade</taxon>
        <taxon>Pooideae</taxon>
        <taxon>Triticodae</taxon>
        <taxon>Triticeae</taxon>
        <taxon>Triticinae</taxon>
        <taxon>Triticum</taxon>
    </lineage>
</organism>
<feature type="chain" id="PRO_0000195959" description="Histone H1.1">
    <location>
        <begin position="1" status="less than"/>
        <end position="25" status="greater than"/>
    </location>
</feature>
<feature type="domain" description="H15" evidence="1">
    <location>
        <begin position="1"/>
        <end position="25"/>
    </location>
</feature>
<feature type="region of interest" description="Disordered" evidence="2">
    <location>
        <begin position="1"/>
        <end position="25"/>
    </location>
</feature>
<feature type="compositionally biased region" description="Basic and acidic residues" evidence="2">
    <location>
        <begin position="9"/>
        <end position="25"/>
    </location>
</feature>
<feature type="non-terminal residue">
    <location>
        <position position="1"/>
    </location>
</feature>
<feature type="non-terminal residue">
    <location>
        <position position="25"/>
    </location>
</feature>
<keyword id="KW-0158">Chromosome</keyword>
<keyword id="KW-0903">Direct protein sequencing</keyword>
<keyword id="KW-0238">DNA-binding</keyword>
<keyword id="KW-0539">Nucleus</keyword>
<keyword id="KW-1185">Reference proteome</keyword>
<proteinExistence type="evidence at protein level"/>
<accession>P15871</accession>
<reference key="1">
    <citation type="journal article" date="1986" name="FEBS Lett.">
        <title>Variants of wheat histone H1 with N- and C-terminal extensions.</title>
        <authorList>
            <person name="Brandt W.F."/>
            <person name="von Holt C."/>
        </authorList>
    </citation>
    <scope>PROTEIN SEQUENCE</scope>
    <source>
        <tissue>Germ</tissue>
    </source>
</reference>
<protein>
    <recommendedName>
        <fullName>Histone H1.1</fullName>
    </recommendedName>
</protein>
<dbReference type="PIR" id="A23605">
    <property type="entry name" value="A23605"/>
</dbReference>
<dbReference type="SMR" id="P15871"/>
<dbReference type="Proteomes" id="UP000019116">
    <property type="component" value="Unplaced"/>
</dbReference>
<dbReference type="GO" id="GO:0000786">
    <property type="term" value="C:nucleosome"/>
    <property type="evidence" value="ECO:0007669"/>
    <property type="project" value="InterPro"/>
</dbReference>
<dbReference type="GO" id="GO:0005634">
    <property type="term" value="C:nucleus"/>
    <property type="evidence" value="ECO:0007669"/>
    <property type="project" value="UniProtKB-SubCell"/>
</dbReference>
<dbReference type="GO" id="GO:0003677">
    <property type="term" value="F:DNA binding"/>
    <property type="evidence" value="ECO:0007669"/>
    <property type="project" value="UniProtKB-KW"/>
</dbReference>
<dbReference type="GO" id="GO:0006334">
    <property type="term" value="P:nucleosome assembly"/>
    <property type="evidence" value="ECO:0007669"/>
    <property type="project" value="InterPro"/>
</dbReference>
<dbReference type="Gene3D" id="1.10.10.10">
    <property type="entry name" value="Winged helix-like DNA-binding domain superfamily/Winged helix DNA-binding domain"/>
    <property type="match status" value="1"/>
</dbReference>
<dbReference type="InterPro" id="IPR005818">
    <property type="entry name" value="Histone_H1/H5_H15"/>
</dbReference>
<dbReference type="InterPro" id="IPR036388">
    <property type="entry name" value="WH-like_DNA-bd_sf"/>
</dbReference>
<dbReference type="Pfam" id="PF00538">
    <property type="entry name" value="Linker_histone"/>
    <property type="match status" value="1"/>
</dbReference>
<dbReference type="PROSITE" id="PS51504">
    <property type="entry name" value="H15"/>
    <property type="match status" value="1"/>
</dbReference>
<comment type="function">
    <text>Histones H1 are necessary for the condensation of nucleosome chains into higher-order structures.</text>
</comment>
<comment type="subcellular location">
    <subcellularLocation>
        <location>Nucleus</location>
    </subcellularLocation>
    <subcellularLocation>
        <location>Chromosome</location>
    </subcellularLocation>
</comment>